<organism>
    <name type="scientific">Clostridium botulinum (strain Okra / Type B1)</name>
    <dbReference type="NCBI Taxonomy" id="498213"/>
    <lineage>
        <taxon>Bacteria</taxon>
        <taxon>Bacillati</taxon>
        <taxon>Bacillota</taxon>
        <taxon>Clostridia</taxon>
        <taxon>Eubacteriales</taxon>
        <taxon>Clostridiaceae</taxon>
        <taxon>Clostridium</taxon>
    </lineage>
</organism>
<proteinExistence type="inferred from homology"/>
<dbReference type="EMBL" id="CP000939">
    <property type="protein sequence ID" value="ACA43361.1"/>
    <property type="molecule type" value="Genomic_DNA"/>
</dbReference>
<dbReference type="RefSeq" id="WP_003401717.1">
    <property type="nucleotide sequence ID" value="NC_010516.1"/>
</dbReference>
<dbReference type="SMR" id="B1IGC7"/>
<dbReference type="GeneID" id="5184361"/>
<dbReference type="KEGG" id="cbb:CLD_1051"/>
<dbReference type="HOGENOM" id="CLU_072439_5_0_9"/>
<dbReference type="Proteomes" id="UP000008541">
    <property type="component" value="Chromosome"/>
</dbReference>
<dbReference type="GO" id="GO:1990904">
    <property type="term" value="C:ribonucleoprotein complex"/>
    <property type="evidence" value="ECO:0007669"/>
    <property type="project" value="UniProtKB-KW"/>
</dbReference>
<dbReference type="GO" id="GO:0005840">
    <property type="term" value="C:ribosome"/>
    <property type="evidence" value="ECO:0007669"/>
    <property type="project" value="UniProtKB-KW"/>
</dbReference>
<dbReference type="GO" id="GO:0019843">
    <property type="term" value="F:rRNA binding"/>
    <property type="evidence" value="ECO:0007669"/>
    <property type="project" value="UniProtKB-UniRule"/>
</dbReference>
<dbReference type="GO" id="GO:0003735">
    <property type="term" value="F:structural constituent of ribosome"/>
    <property type="evidence" value="ECO:0007669"/>
    <property type="project" value="InterPro"/>
</dbReference>
<dbReference type="GO" id="GO:0006412">
    <property type="term" value="P:translation"/>
    <property type="evidence" value="ECO:0007669"/>
    <property type="project" value="UniProtKB-UniRule"/>
</dbReference>
<dbReference type="FunFam" id="3.30.420.80:FF:000001">
    <property type="entry name" value="30S ribosomal protein S11"/>
    <property type="match status" value="1"/>
</dbReference>
<dbReference type="Gene3D" id="3.30.420.80">
    <property type="entry name" value="Ribosomal protein S11"/>
    <property type="match status" value="1"/>
</dbReference>
<dbReference type="HAMAP" id="MF_01310">
    <property type="entry name" value="Ribosomal_uS11"/>
    <property type="match status" value="1"/>
</dbReference>
<dbReference type="InterPro" id="IPR001971">
    <property type="entry name" value="Ribosomal_uS11"/>
</dbReference>
<dbReference type="InterPro" id="IPR019981">
    <property type="entry name" value="Ribosomal_uS11_bac-type"/>
</dbReference>
<dbReference type="InterPro" id="IPR018102">
    <property type="entry name" value="Ribosomal_uS11_CS"/>
</dbReference>
<dbReference type="InterPro" id="IPR036967">
    <property type="entry name" value="Ribosomal_uS11_sf"/>
</dbReference>
<dbReference type="NCBIfam" id="NF003698">
    <property type="entry name" value="PRK05309.1"/>
    <property type="match status" value="1"/>
</dbReference>
<dbReference type="NCBIfam" id="TIGR03632">
    <property type="entry name" value="uS11_bact"/>
    <property type="match status" value="1"/>
</dbReference>
<dbReference type="PANTHER" id="PTHR11759">
    <property type="entry name" value="40S RIBOSOMAL PROTEIN S14/30S RIBOSOMAL PROTEIN S11"/>
    <property type="match status" value="1"/>
</dbReference>
<dbReference type="Pfam" id="PF00411">
    <property type="entry name" value="Ribosomal_S11"/>
    <property type="match status" value="1"/>
</dbReference>
<dbReference type="PIRSF" id="PIRSF002131">
    <property type="entry name" value="Ribosomal_S11"/>
    <property type="match status" value="1"/>
</dbReference>
<dbReference type="SUPFAM" id="SSF53137">
    <property type="entry name" value="Translational machinery components"/>
    <property type="match status" value="1"/>
</dbReference>
<dbReference type="PROSITE" id="PS00054">
    <property type="entry name" value="RIBOSOMAL_S11"/>
    <property type="match status" value="1"/>
</dbReference>
<feature type="chain" id="PRO_1000141072" description="Small ribosomal subunit protein uS11">
    <location>
        <begin position="1"/>
        <end position="132"/>
    </location>
</feature>
<feature type="region of interest" description="Disordered" evidence="2">
    <location>
        <begin position="1"/>
        <end position="20"/>
    </location>
</feature>
<feature type="compositionally biased region" description="Basic residues" evidence="2">
    <location>
        <begin position="1"/>
        <end position="16"/>
    </location>
</feature>
<keyword id="KW-0687">Ribonucleoprotein</keyword>
<keyword id="KW-0689">Ribosomal protein</keyword>
<keyword id="KW-0694">RNA-binding</keyword>
<keyword id="KW-0699">rRNA-binding</keyword>
<protein>
    <recommendedName>
        <fullName evidence="1">Small ribosomal subunit protein uS11</fullName>
    </recommendedName>
    <alternativeName>
        <fullName evidence="3">30S ribosomal protein S11</fullName>
    </alternativeName>
</protein>
<comment type="function">
    <text evidence="1">Located on the platform of the 30S subunit, it bridges several disparate RNA helices of the 16S rRNA. Forms part of the Shine-Dalgarno cleft in the 70S ribosome.</text>
</comment>
<comment type="subunit">
    <text evidence="1">Part of the 30S ribosomal subunit. Interacts with proteins S7 and S18. Binds to IF-3.</text>
</comment>
<comment type="similarity">
    <text evidence="1">Belongs to the universal ribosomal protein uS11 family.</text>
</comment>
<evidence type="ECO:0000255" key="1">
    <source>
        <dbReference type="HAMAP-Rule" id="MF_01310"/>
    </source>
</evidence>
<evidence type="ECO:0000256" key="2">
    <source>
        <dbReference type="SAM" id="MobiDB-lite"/>
    </source>
</evidence>
<evidence type="ECO:0000305" key="3"/>
<accession>B1IGC7</accession>
<reference key="1">
    <citation type="journal article" date="2007" name="PLoS ONE">
        <title>Analysis of the neurotoxin complex genes in Clostridium botulinum A1-A4 and B1 strains: BoNT/A3, /Ba4 and /B1 clusters are located within plasmids.</title>
        <authorList>
            <person name="Smith T.J."/>
            <person name="Hill K.K."/>
            <person name="Foley B.T."/>
            <person name="Detter J.C."/>
            <person name="Munk A.C."/>
            <person name="Bruce D.C."/>
            <person name="Doggett N.A."/>
            <person name="Smith L.A."/>
            <person name="Marks J.D."/>
            <person name="Xie G."/>
            <person name="Brettin T.S."/>
        </authorList>
    </citation>
    <scope>NUCLEOTIDE SEQUENCE [LARGE SCALE GENOMIC DNA]</scope>
    <source>
        <strain>Okra / Type B1</strain>
    </source>
</reference>
<sequence>MAAGMKGKRSRRRKERKNVEHGCAHIKSTFNNSIVTITDSVGNTLSWASAGGLGFRGSRKSTPFAAQMAAETAAKAAMEHGLKSIEVYVKGPGSGREAAIRSLQAAGLEVTLIKDVTPIPHNGCRPPKRRRV</sequence>
<gene>
    <name evidence="1" type="primary">rpsK</name>
    <name type="ordered locus">CLD_1051</name>
</gene>
<name>RS11_CLOBK</name>